<accession>Q5FFR9</accession>
<protein>
    <recommendedName>
        <fullName evidence="1">Small ribosomal subunit protein uS13</fullName>
    </recommendedName>
    <alternativeName>
        <fullName evidence="3">30S ribosomal protein S13</fullName>
    </alternativeName>
</protein>
<organism>
    <name type="scientific">Ehrlichia ruminantium (strain Gardel)</name>
    <dbReference type="NCBI Taxonomy" id="302409"/>
    <lineage>
        <taxon>Bacteria</taxon>
        <taxon>Pseudomonadati</taxon>
        <taxon>Pseudomonadota</taxon>
        <taxon>Alphaproteobacteria</taxon>
        <taxon>Rickettsiales</taxon>
        <taxon>Anaplasmataceae</taxon>
        <taxon>Ehrlichia</taxon>
    </lineage>
</organism>
<proteinExistence type="inferred from homology"/>
<dbReference type="EMBL" id="CR925677">
    <property type="protein sequence ID" value="CAI28060.1"/>
    <property type="molecule type" value="Genomic_DNA"/>
</dbReference>
<dbReference type="RefSeq" id="WP_011155268.1">
    <property type="nucleotide sequence ID" value="NC_006831.1"/>
</dbReference>
<dbReference type="SMR" id="Q5FFR9"/>
<dbReference type="GeneID" id="33057529"/>
<dbReference type="KEGG" id="erg:ERGA_CDS_06080"/>
<dbReference type="HOGENOM" id="CLU_103849_1_2_5"/>
<dbReference type="OrthoDB" id="9803610at2"/>
<dbReference type="Proteomes" id="UP000000533">
    <property type="component" value="Chromosome"/>
</dbReference>
<dbReference type="GO" id="GO:0005829">
    <property type="term" value="C:cytosol"/>
    <property type="evidence" value="ECO:0007669"/>
    <property type="project" value="TreeGrafter"/>
</dbReference>
<dbReference type="GO" id="GO:0015935">
    <property type="term" value="C:small ribosomal subunit"/>
    <property type="evidence" value="ECO:0007669"/>
    <property type="project" value="TreeGrafter"/>
</dbReference>
<dbReference type="GO" id="GO:0019843">
    <property type="term" value="F:rRNA binding"/>
    <property type="evidence" value="ECO:0007669"/>
    <property type="project" value="UniProtKB-UniRule"/>
</dbReference>
<dbReference type="GO" id="GO:0003735">
    <property type="term" value="F:structural constituent of ribosome"/>
    <property type="evidence" value="ECO:0007669"/>
    <property type="project" value="InterPro"/>
</dbReference>
<dbReference type="GO" id="GO:0000049">
    <property type="term" value="F:tRNA binding"/>
    <property type="evidence" value="ECO:0007669"/>
    <property type="project" value="UniProtKB-UniRule"/>
</dbReference>
<dbReference type="GO" id="GO:0006412">
    <property type="term" value="P:translation"/>
    <property type="evidence" value="ECO:0007669"/>
    <property type="project" value="UniProtKB-UniRule"/>
</dbReference>
<dbReference type="FunFam" id="1.10.8.50:FF:000001">
    <property type="entry name" value="30S ribosomal protein S13"/>
    <property type="match status" value="1"/>
</dbReference>
<dbReference type="FunFam" id="4.10.910.10:FF:000001">
    <property type="entry name" value="30S ribosomal protein S13"/>
    <property type="match status" value="1"/>
</dbReference>
<dbReference type="Gene3D" id="1.10.8.50">
    <property type="match status" value="1"/>
</dbReference>
<dbReference type="Gene3D" id="4.10.910.10">
    <property type="entry name" value="30s ribosomal protein s13, domain 2"/>
    <property type="match status" value="1"/>
</dbReference>
<dbReference type="HAMAP" id="MF_01315">
    <property type="entry name" value="Ribosomal_uS13"/>
    <property type="match status" value="1"/>
</dbReference>
<dbReference type="InterPro" id="IPR027437">
    <property type="entry name" value="Rbsml_uS13_C"/>
</dbReference>
<dbReference type="InterPro" id="IPR001892">
    <property type="entry name" value="Ribosomal_uS13"/>
</dbReference>
<dbReference type="InterPro" id="IPR010979">
    <property type="entry name" value="Ribosomal_uS13-like_H2TH"/>
</dbReference>
<dbReference type="InterPro" id="IPR019980">
    <property type="entry name" value="Ribosomal_uS13_bac-type"/>
</dbReference>
<dbReference type="InterPro" id="IPR018269">
    <property type="entry name" value="Ribosomal_uS13_CS"/>
</dbReference>
<dbReference type="NCBIfam" id="TIGR03631">
    <property type="entry name" value="uS13_bact"/>
    <property type="match status" value="1"/>
</dbReference>
<dbReference type="PANTHER" id="PTHR10871">
    <property type="entry name" value="30S RIBOSOMAL PROTEIN S13/40S RIBOSOMAL PROTEIN S18"/>
    <property type="match status" value="1"/>
</dbReference>
<dbReference type="PANTHER" id="PTHR10871:SF1">
    <property type="entry name" value="SMALL RIBOSOMAL SUBUNIT PROTEIN US13M"/>
    <property type="match status" value="1"/>
</dbReference>
<dbReference type="Pfam" id="PF00416">
    <property type="entry name" value="Ribosomal_S13"/>
    <property type="match status" value="1"/>
</dbReference>
<dbReference type="PIRSF" id="PIRSF002134">
    <property type="entry name" value="Ribosomal_S13"/>
    <property type="match status" value="1"/>
</dbReference>
<dbReference type="SUPFAM" id="SSF46946">
    <property type="entry name" value="S13-like H2TH domain"/>
    <property type="match status" value="1"/>
</dbReference>
<dbReference type="PROSITE" id="PS00646">
    <property type="entry name" value="RIBOSOMAL_S13_1"/>
    <property type="match status" value="1"/>
</dbReference>
<dbReference type="PROSITE" id="PS50159">
    <property type="entry name" value="RIBOSOMAL_S13_2"/>
    <property type="match status" value="1"/>
</dbReference>
<comment type="function">
    <text evidence="1">Located at the top of the head of the 30S subunit, it contacts several helices of the 16S rRNA. In the 70S ribosome it contacts the 23S rRNA (bridge B1a) and protein L5 of the 50S subunit (bridge B1b), connecting the 2 subunits; these bridges are implicated in subunit movement. Contacts the tRNAs in the A and P-sites.</text>
</comment>
<comment type="subunit">
    <text evidence="1">Part of the 30S ribosomal subunit. Forms a loose heterodimer with protein S19. Forms two bridges to the 50S subunit in the 70S ribosome.</text>
</comment>
<comment type="similarity">
    <text evidence="1">Belongs to the universal ribosomal protein uS13 family.</text>
</comment>
<name>RS13_EHRRG</name>
<reference key="1">
    <citation type="journal article" date="2006" name="J. Bacteriol.">
        <title>Comparative genomic analysis of three strains of Ehrlichia ruminantium reveals an active process of genome size plasticity.</title>
        <authorList>
            <person name="Frutos R."/>
            <person name="Viari A."/>
            <person name="Ferraz C."/>
            <person name="Morgat A."/>
            <person name="Eychenie S."/>
            <person name="Kandassamy Y."/>
            <person name="Chantal I."/>
            <person name="Bensaid A."/>
            <person name="Coissac E."/>
            <person name="Vachiery N."/>
            <person name="Demaille J."/>
            <person name="Martinez D."/>
        </authorList>
    </citation>
    <scope>NUCLEOTIDE SEQUENCE [LARGE SCALE GENOMIC DNA]</scope>
    <source>
        <strain>Gardel</strain>
    </source>
</reference>
<feature type="chain" id="PRO_0000230504" description="Small ribosomal subunit protein uS13">
    <location>
        <begin position="1"/>
        <end position="123"/>
    </location>
</feature>
<feature type="region of interest" description="Disordered" evidence="2">
    <location>
        <begin position="97"/>
        <end position="123"/>
    </location>
</feature>
<sequence length="123" mass="14029">MARIAGVNIPTNKRVVIALTYIYGIGISLANKICESCNIDHNIRVVNLSDDEIIRIRNFIRENYVVEGDLRKEVSMNIKFLTDIGCYRGLRHRRGLPVRGQRTHTNAKTRKGRSRLPVAAKKK</sequence>
<keyword id="KW-0687">Ribonucleoprotein</keyword>
<keyword id="KW-0689">Ribosomal protein</keyword>
<keyword id="KW-0694">RNA-binding</keyword>
<keyword id="KW-0699">rRNA-binding</keyword>
<keyword id="KW-0820">tRNA-binding</keyword>
<gene>
    <name evidence="1" type="primary">rpsM</name>
    <name type="ordered locus">ERGA_CDS_06080</name>
</gene>
<evidence type="ECO:0000255" key="1">
    <source>
        <dbReference type="HAMAP-Rule" id="MF_01315"/>
    </source>
</evidence>
<evidence type="ECO:0000256" key="2">
    <source>
        <dbReference type="SAM" id="MobiDB-lite"/>
    </source>
</evidence>
<evidence type="ECO:0000305" key="3"/>